<evidence type="ECO:0000255" key="1">
    <source>
        <dbReference type="HAMAP-Rule" id="MF_01013"/>
    </source>
</evidence>
<protein>
    <recommendedName>
        <fullName evidence="1">Imidazole glycerol phosphate synthase subunit HisF</fullName>
        <ecNumber evidence="1">4.3.2.10</ecNumber>
    </recommendedName>
    <alternativeName>
        <fullName evidence="1">IGP synthase cyclase subunit</fullName>
    </alternativeName>
    <alternativeName>
        <fullName evidence="1">IGP synthase subunit HisF</fullName>
    </alternativeName>
    <alternativeName>
        <fullName evidence="1">ImGP synthase subunit HisF</fullName>
        <shortName evidence="1">IGPS subunit HisF</shortName>
    </alternativeName>
</protein>
<feature type="chain" id="PRO_0000319461" description="Imidazole glycerol phosphate synthase subunit HisF">
    <location>
        <begin position="1"/>
        <end position="254"/>
    </location>
</feature>
<feature type="active site" evidence="1">
    <location>
        <position position="14"/>
    </location>
</feature>
<feature type="active site" evidence="1">
    <location>
        <position position="133"/>
    </location>
</feature>
<organism>
    <name type="scientific">Nitratiruptor sp. (strain SB155-2)</name>
    <dbReference type="NCBI Taxonomy" id="387092"/>
    <lineage>
        <taxon>Bacteria</taxon>
        <taxon>Pseudomonadati</taxon>
        <taxon>Campylobacterota</taxon>
        <taxon>Epsilonproteobacteria</taxon>
        <taxon>Nautiliales</taxon>
        <taxon>Nitratiruptoraceae</taxon>
        <taxon>Nitratiruptor</taxon>
    </lineage>
</organism>
<comment type="function">
    <text evidence="1">IGPS catalyzes the conversion of PRFAR and glutamine to IGP, AICAR and glutamate. The HisF subunit catalyzes the cyclization activity that produces IGP and AICAR from PRFAR using the ammonia provided by the HisH subunit.</text>
</comment>
<comment type="catalytic activity">
    <reaction evidence="1">
        <text>5-[(5-phospho-1-deoxy-D-ribulos-1-ylimino)methylamino]-1-(5-phospho-beta-D-ribosyl)imidazole-4-carboxamide + L-glutamine = D-erythro-1-(imidazol-4-yl)glycerol 3-phosphate + 5-amino-1-(5-phospho-beta-D-ribosyl)imidazole-4-carboxamide + L-glutamate + H(+)</text>
        <dbReference type="Rhea" id="RHEA:24793"/>
        <dbReference type="ChEBI" id="CHEBI:15378"/>
        <dbReference type="ChEBI" id="CHEBI:29985"/>
        <dbReference type="ChEBI" id="CHEBI:58278"/>
        <dbReference type="ChEBI" id="CHEBI:58359"/>
        <dbReference type="ChEBI" id="CHEBI:58475"/>
        <dbReference type="ChEBI" id="CHEBI:58525"/>
        <dbReference type="EC" id="4.3.2.10"/>
    </reaction>
</comment>
<comment type="pathway">
    <text evidence="1">Amino-acid biosynthesis; L-histidine biosynthesis; L-histidine from 5-phospho-alpha-D-ribose 1-diphosphate: step 5/9.</text>
</comment>
<comment type="subunit">
    <text evidence="1">Heterodimer of HisH and HisF.</text>
</comment>
<comment type="subcellular location">
    <subcellularLocation>
        <location evidence="1">Cytoplasm</location>
    </subcellularLocation>
</comment>
<comment type="similarity">
    <text evidence="1">Belongs to the HisA/HisF family.</text>
</comment>
<reference key="1">
    <citation type="journal article" date="2007" name="Proc. Natl. Acad. Sci. U.S.A.">
        <title>Deep-sea vent epsilon-proteobacterial genomes provide insights into emergence of pathogens.</title>
        <authorList>
            <person name="Nakagawa S."/>
            <person name="Takaki Y."/>
            <person name="Shimamura S."/>
            <person name="Reysenbach A.-L."/>
            <person name="Takai K."/>
            <person name="Horikoshi K."/>
        </authorList>
    </citation>
    <scope>NUCLEOTIDE SEQUENCE [LARGE SCALE GENOMIC DNA]</scope>
    <source>
        <strain>SB155-2</strain>
    </source>
</reference>
<name>HIS6_NITSB</name>
<keyword id="KW-0028">Amino-acid biosynthesis</keyword>
<keyword id="KW-0963">Cytoplasm</keyword>
<keyword id="KW-0368">Histidine biosynthesis</keyword>
<keyword id="KW-0456">Lyase</keyword>
<keyword id="KW-1185">Reference proteome</keyword>
<gene>
    <name evidence="1" type="primary">hisF</name>
    <name type="ordered locus">NIS_0059</name>
</gene>
<proteinExistence type="inferred from homology"/>
<accession>A6Q117</accession>
<dbReference type="EC" id="4.3.2.10" evidence="1"/>
<dbReference type="EMBL" id="AP009178">
    <property type="protein sequence ID" value="BAF69176.1"/>
    <property type="molecule type" value="Genomic_DNA"/>
</dbReference>
<dbReference type="RefSeq" id="WP_011979602.1">
    <property type="nucleotide sequence ID" value="NC_009662.1"/>
</dbReference>
<dbReference type="SMR" id="A6Q117"/>
<dbReference type="FunCoup" id="A6Q117">
    <property type="interactions" value="470"/>
</dbReference>
<dbReference type="STRING" id="387092.NIS_0059"/>
<dbReference type="KEGG" id="nis:NIS_0059"/>
<dbReference type="eggNOG" id="COG0107">
    <property type="taxonomic scope" value="Bacteria"/>
</dbReference>
<dbReference type="HOGENOM" id="CLU_048577_4_0_7"/>
<dbReference type="InParanoid" id="A6Q117"/>
<dbReference type="OrthoDB" id="9807749at2"/>
<dbReference type="UniPathway" id="UPA00031">
    <property type="reaction ID" value="UER00010"/>
</dbReference>
<dbReference type="Proteomes" id="UP000001118">
    <property type="component" value="Chromosome"/>
</dbReference>
<dbReference type="GO" id="GO:0005737">
    <property type="term" value="C:cytoplasm"/>
    <property type="evidence" value="ECO:0007669"/>
    <property type="project" value="UniProtKB-SubCell"/>
</dbReference>
<dbReference type="GO" id="GO:0000107">
    <property type="term" value="F:imidazoleglycerol-phosphate synthase activity"/>
    <property type="evidence" value="ECO:0007669"/>
    <property type="project" value="UniProtKB-UniRule"/>
</dbReference>
<dbReference type="GO" id="GO:0016829">
    <property type="term" value="F:lyase activity"/>
    <property type="evidence" value="ECO:0007669"/>
    <property type="project" value="UniProtKB-KW"/>
</dbReference>
<dbReference type="GO" id="GO:0000105">
    <property type="term" value="P:L-histidine biosynthetic process"/>
    <property type="evidence" value="ECO:0007669"/>
    <property type="project" value="UniProtKB-UniRule"/>
</dbReference>
<dbReference type="CDD" id="cd04731">
    <property type="entry name" value="HisF"/>
    <property type="match status" value="1"/>
</dbReference>
<dbReference type="FunFam" id="3.20.20.70:FF:000006">
    <property type="entry name" value="Imidazole glycerol phosphate synthase subunit HisF"/>
    <property type="match status" value="1"/>
</dbReference>
<dbReference type="Gene3D" id="3.20.20.70">
    <property type="entry name" value="Aldolase class I"/>
    <property type="match status" value="1"/>
</dbReference>
<dbReference type="HAMAP" id="MF_01013">
    <property type="entry name" value="HisF"/>
    <property type="match status" value="1"/>
</dbReference>
<dbReference type="InterPro" id="IPR013785">
    <property type="entry name" value="Aldolase_TIM"/>
</dbReference>
<dbReference type="InterPro" id="IPR006062">
    <property type="entry name" value="His_biosynth"/>
</dbReference>
<dbReference type="InterPro" id="IPR004651">
    <property type="entry name" value="HisF"/>
</dbReference>
<dbReference type="InterPro" id="IPR050064">
    <property type="entry name" value="IGPS_HisA/HisF"/>
</dbReference>
<dbReference type="InterPro" id="IPR011060">
    <property type="entry name" value="RibuloseP-bd_barrel"/>
</dbReference>
<dbReference type="NCBIfam" id="TIGR00735">
    <property type="entry name" value="hisF"/>
    <property type="match status" value="1"/>
</dbReference>
<dbReference type="PANTHER" id="PTHR21235:SF2">
    <property type="entry name" value="IMIDAZOLE GLYCEROL PHOSPHATE SYNTHASE HISHF"/>
    <property type="match status" value="1"/>
</dbReference>
<dbReference type="PANTHER" id="PTHR21235">
    <property type="entry name" value="IMIDAZOLE GLYCEROL PHOSPHATE SYNTHASE SUBUNIT HISF/H IGP SYNTHASE SUBUNIT HISF/H"/>
    <property type="match status" value="1"/>
</dbReference>
<dbReference type="Pfam" id="PF00977">
    <property type="entry name" value="His_biosynth"/>
    <property type="match status" value="1"/>
</dbReference>
<dbReference type="SUPFAM" id="SSF51366">
    <property type="entry name" value="Ribulose-phoshate binding barrel"/>
    <property type="match status" value="1"/>
</dbReference>
<sequence length="254" mass="27663">MQEYFAKRIIPCLDVDKGRVVKGVNFVGLKDAGDPVEVAKRYNEEGADEITFLDITATYEERDTIVHIVEEVAKEVFIPLTVGGGIRELDDIYKLLAVGCDKVSINSAAVKKPEFVDEAAKRFGSQCIVVAIDAKRVGDGWHVFTAGGRHDSGKDAIEWAKEVYDRGAGEILLTSMDADGTKAGYDLELTRAISDAVDIPVIASGGAGTMEHIKDAFTKGHADAALAASIFHFKEIDIMELKHYLHNEGIPVRL</sequence>